<organism>
    <name type="scientific">Listeria welshimeri serovar 6b (strain ATCC 35897 / DSM 20650 / CCUG 15529 / CIP 8149 / NCTC 11857 / SLCC 5334 / V8)</name>
    <dbReference type="NCBI Taxonomy" id="386043"/>
    <lineage>
        <taxon>Bacteria</taxon>
        <taxon>Bacillati</taxon>
        <taxon>Bacillota</taxon>
        <taxon>Bacilli</taxon>
        <taxon>Bacillales</taxon>
        <taxon>Listeriaceae</taxon>
        <taxon>Listeria</taxon>
    </lineage>
</organism>
<evidence type="ECO:0000255" key="1">
    <source>
        <dbReference type="HAMAP-Rule" id="MF_00278"/>
    </source>
</evidence>
<gene>
    <name evidence="1" type="primary">hisH</name>
    <name type="ordered locus">lwe0531</name>
</gene>
<reference key="1">
    <citation type="journal article" date="2006" name="J. Bacteriol.">
        <title>Whole-genome sequence of Listeria welshimeri reveals common steps in genome reduction with Listeria innocua as compared to Listeria monocytogenes.</title>
        <authorList>
            <person name="Hain T."/>
            <person name="Steinweg C."/>
            <person name="Kuenne C.T."/>
            <person name="Billion A."/>
            <person name="Ghai R."/>
            <person name="Chatterjee S.S."/>
            <person name="Domann E."/>
            <person name="Kaerst U."/>
            <person name="Goesmann A."/>
            <person name="Bekel T."/>
            <person name="Bartels D."/>
            <person name="Kaiser O."/>
            <person name="Meyer F."/>
            <person name="Puehler A."/>
            <person name="Weisshaar B."/>
            <person name="Wehland J."/>
            <person name="Liang C."/>
            <person name="Dandekar T."/>
            <person name="Lampidis R."/>
            <person name="Kreft J."/>
            <person name="Goebel W."/>
            <person name="Chakraborty T."/>
        </authorList>
    </citation>
    <scope>NUCLEOTIDE SEQUENCE [LARGE SCALE GENOMIC DNA]</scope>
    <source>
        <strain>ATCC 35897 / DSM 20650 / CCUG 15529 / CIP 8149 / NCTC 11857 / SLCC 5334 / V8</strain>
    </source>
</reference>
<comment type="function">
    <text evidence="1">IGPS catalyzes the conversion of PRFAR and glutamine to IGP, AICAR and glutamate. The HisH subunit catalyzes the hydrolysis of glutamine to glutamate and ammonia as part of the synthesis of IGP and AICAR. The resulting ammonia molecule is channeled to the active site of HisF.</text>
</comment>
<comment type="catalytic activity">
    <reaction evidence="1">
        <text>5-[(5-phospho-1-deoxy-D-ribulos-1-ylimino)methylamino]-1-(5-phospho-beta-D-ribosyl)imidazole-4-carboxamide + L-glutamine = D-erythro-1-(imidazol-4-yl)glycerol 3-phosphate + 5-amino-1-(5-phospho-beta-D-ribosyl)imidazole-4-carboxamide + L-glutamate + H(+)</text>
        <dbReference type="Rhea" id="RHEA:24793"/>
        <dbReference type="ChEBI" id="CHEBI:15378"/>
        <dbReference type="ChEBI" id="CHEBI:29985"/>
        <dbReference type="ChEBI" id="CHEBI:58278"/>
        <dbReference type="ChEBI" id="CHEBI:58359"/>
        <dbReference type="ChEBI" id="CHEBI:58475"/>
        <dbReference type="ChEBI" id="CHEBI:58525"/>
        <dbReference type="EC" id="4.3.2.10"/>
    </reaction>
</comment>
<comment type="catalytic activity">
    <reaction evidence="1">
        <text>L-glutamine + H2O = L-glutamate + NH4(+)</text>
        <dbReference type="Rhea" id="RHEA:15889"/>
        <dbReference type="ChEBI" id="CHEBI:15377"/>
        <dbReference type="ChEBI" id="CHEBI:28938"/>
        <dbReference type="ChEBI" id="CHEBI:29985"/>
        <dbReference type="ChEBI" id="CHEBI:58359"/>
        <dbReference type="EC" id="3.5.1.2"/>
    </reaction>
</comment>
<comment type="pathway">
    <text evidence="1">Amino-acid biosynthesis; L-histidine biosynthesis; L-histidine from 5-phospho-alpha-D-ribose 1-diphosphate: step 5/9.</text>
</comment>
<comment type="subunit">
    <text evidence="1">Heterodimer of HisH and HisF.</text>
</comment>
<comment type="subcellular location">
    <subcellularLocation>
        <location evidence="1">Cytoplasm</location>
    </subcellularLocation>
</comment>
<protein>
    <recommendedName>
        <fullName evidence="1">Imidazole glycerol phosphate synthase subunit HisH</fullName>
        <ecNumber evidence="1">4.3.2.10</ecNumber>
    </recommendedName>
    <alternativeName>
        <fullName evidence="1">IGP synthase glutaminase subunit</fullName>
        <ecNumber evidence="1">3.5.1.2</ecNumber>
    </alternativeName>
    <alternativeName>
        <fullName evidence="1">IGP synthase subunit HisH</fullName>
    </alternativeName>
    <alternativeName>
        <fullName evidence="1">ImGP synthase subunit HisH</fullName>
        <shortName evidence="1">IGPS subunit HisH</shortName>
    </alternativeName>
</protein>
<sequence length="208" mass="23082">MIVIIDYDTGNTKSISKALDFIGLQNKISSNKTEILQADGVILPGVGAYPEAMQELIRRGLDVTLKEIAVLRKPILGVCLGMQLLLESSNEHVFTRGLGLIPGYAEKLPDEPKFVIPHMGWNQLENKRITPLTKKVDGEYVYYVHSYYANCPPEYIIATSGYSVEIPGMINNGHIYGAQFHPEKSGQIGLEILKGFKEVIRSCKSSLQ</sequence>
<accession>A0AG17</accession>
<name>HIS5_LISW6</name>
<keyword id="KW-0028">Amino-acid biosynthesis</keyword>
<keyword id="KW-0963">Cytoplasm</keyword>
<keyword id="KW-0315">Glutamine amidotransferase</keyword>
<keyword id="KW-0368">Histidine biosynthesis</keyword>
<keyword id="KW-0378">Hydrolase</keyword>
<keyword id="KW-0456">Lyase</keyword>
<feature type="chain" id="PRO_1000114784" description="Imidazole glycerol phosphate synthase subunit HisH">
    <location>
        <begin position="1"/>
        <end position="208"/>
    </location>
</feature>
<feature type="domain" description="Glutamine amidotransferase type-1" evidence="1">
    <location>
        <begin position="1"/>
        <end position="206"/>
    </location>
</feature>
<feature type="active site" description="Nucleophile" evidence="1">
    <location>
        <position position="79"/>
    </location>
</feature>
<feature type="active site" evidence="1">
    <location>
        <position position="181"/>
    </location>
</feature>
<feature type="active site" evidence="1">
    <location>
        <position position="183"/>
    </location>
</feature>
<proteinExistence type="inferred from homology"/>
<dbReference type="EC" id="4.3.2.10" evidence="1"/>
<dbReference type="EC" id="3.5.1.2" evidence="1"/>
<dbReference type="EMBL" id="AM263198">
    <property type="protein sequence ID" value="CAK19949.1"/>
    <property type="molecule type" value="Genomic_DNA"/>
</dbReference>
<dbReference type="RefSeq" id="WP_011701376.1">
    <property type="nucleotide sequence ID" value="NC_008555.1"/>
</dbReference>
<dbReference type="SMR" id="A0AG17"/>
<dbReference type="STRING" id="386043.lwe0531"/>
<dbReference type="GeneID" id="61188419"/>
<dbReference type="KEGG" id="lwe:lwe0531"/>
<dbReference type="eggNOG" id="COG0118">
    <property type="taxonomic scope" value="Bacteria"/>
</dbReference>
<dbReference type="HOGENOM" id="CLU_071837_2_2_9"/>
<dbReference type="OrthoDB" id="9807137at2"/>
<dbReference type="UniPathway" id="UPA00031">
    <property type="reaction ID" value="UER00010"/>
</dbReference>
<dbReference type="Proteomes" id="UP000000779">
    <property type="component" value="Chromosome"/>
</dbReference>
<dbReference type="GO" id="GO:0005737">
    <property type="term" value="C:cytoplasm"/>
    <property type="evidence" value="ECO:0007669"/>
    <property type="project" value="UniProtKB-SubCell"/>
</dbReference>
<dbReference type="GO" id="GO:0004359">
    <property type="term" value="F:glutaminase activity"/>
    <property type="evidence" value="ECO:0007669"/>
    <property type="project" value="UniProtKB-EC"/>
</dbReference>
<dbReference type="GO" id="GO:0000107">
    <property type="term" value="F:imidazoleglycerol-phosphate synthase activity"/>
    <property type="evidence" value="ECO:0007669"/>
    <property type="project" value="UniProtKB-UniRule"/>
</dbReference>
<dbReference type="GO" id="GO:0016829">
    <property type="term" value="F:lyase activity"/>
    <property type="evidence" value="ECO:0007669"/>
    <property type="project" value="UniProtKB-KW"/>
</dbReference>
<dbReference type="GO" id="GO:0000105">
    <property type="term" value="P:L-histidine biosynthetic process"/>
    <property type="evidence" value="ECO:0007669"/>
    <property type="project" value="UniProtKB-UniRule"/>
</dbReference>
<dbReference type="CDD" id="cd01748">
    <property type="entry name" value="GATase1_IGP_Synthase"/>
    <property type="match status" value="1"/>
</dbReference>
<dbReference type="FunFam" id="3.40.50.880:FF:000028">
    <property type="entry name" value="Imidazole glycerol phosphate synthase subunit HisH"/>
    <property type="match status" value="1"/>
</dbReference>
<dbReference type="Gene3D" id="3.40.50.880">
    <property type="match status" value="1"/>
</dbReference>
<dbReference type="HAMAP" id="MF_00278">
    <property type="entry name" value="HisH"/>
    <property type="match status" value="1"/>
</dbReference>
<dbReference type="InterPro" id="IPR029062">
    <property type="entry name" value="Class_I_gatase-like"/>
</dbReference>
<dbReference type="InterPro" id="IPR017926">
    <property type="entry name" value="GATASE"/>
</dbReference>
<dbReference type="InterPro" id="IPR010139">
    <property type="entry name" value="Imidazole-glycPsynth_HisH"/>
</dbReference>
<dbReference type="NCBIfam" id="TIGR01855">
    <property type="entry name" value="IMP_synth_hisH"/>
    <property type="match status" value="1"/>
</dbReference>
<dbReference type="PANTHER" id="PTHR42701">
    <property type="entry name" value="IMIDAZOLE GLYCEROL PHOSPHATE SYNTHASE SUBUNIT HISH"/>
    <property type="match status" value="1"/>
</dbReference>
<dbReference type="PANTHER" id="PTHR42701:SF1">
    <property type="entry name" value="IMIDAZOLE GLYCEROL PHOSPHATE SYNTHASE SUBUNIT HISH"/>
    <property type="match status" value="1"/>
</dbReference>
<dbReference type="Pfam" id="PF00117">
    <property type="entry name" value="GATase"/>
    <property type="match status" value="1"/>
</dbReference>
<dbReference type="PIRSF" id="PIRSF000495">
    <property type="entry name" value="Amidotransf_hisH"/>
    <property type="match status" value="1"/>
</dbReference>
<dbReference type="SUPFAM" id="SSF52317">
    <property type="entry name" value="Class I glutamine amidotransferase-like"/>
    <property type="match status" value="1"/>
</dbReference>
<dbReference type="PROSITE" id="PS51273">
    <property type="entry name" value="GATASE_TYPE_1"/>
    <property type="match status" value="1"/>
</dbReference>